<feature type="chain" id="PRO_0000373664" description="Uncharacterized protein B354L">
    <location>
        <begin position="1"/>
        <end position="354"/>
    </location>
</feature>
<name>VF354_ASFP4</name>
<dbReference type="EMBL" id="AY261363">
    <property type="status" value="NOT_ANNOTATED_CDS"/>
    <property type="molecule type" value="Genomic_DNA"/>
</dbReference>
<dbReference type="Proteomes" id="UP000000859">
    <property type="component" value="Segment"/>
</dbReference>
<dbReference type="InterPro" id="IPR027417">
    <property type="entry name" value="P-loop_NTPase"/>
</dbReference>
<dbReference type="SUPFAM" id="SSF52540">
    <property type="entry name" value="P-loop containing nucleoside triphosphate hydrolases"/>
    <property type="match status" value="2"/>
</dbReference>
<gene>
    <name type="ordered locus">Pret-090</name>
</gene>
<sequence length="354" mass="41689">MALTTHSGKLIPELQFKAHHFIDKTTVLYGPSKTGKTVYVKHIMKILQPHIEQILVVAPSEPSNRSYEGFVHPTLIHYRLWLADKQKKNDNKGAERFLEAIWQRQTMMSSIYSRVNNIDMLKTLYHKLPIDIQQKENKNIAKVECLKAEQTDQKKEEKITSLYQQLLKKIIIQNIHMYKNLCLTEDEKFTLNYINLNPRLLLILDDCAAELHPLFTKEIFKKFFYQNRHCFISMIICCQDDTDLPANLRKNAFVSIFTNASICMSNFSRQSNRYSKQDKEYVEEISHIVFKGYRKLVYIREDENRQHFYHSTVPLPTAFSFGSKALLKLCKAVYSKEVVIDKSNPYWSKFRLTF</sequence>
<proteinExistence type="inferred from homology"/>
<evidence type="ECO:0000305" key="1"/>
<organism>
    <name type="scientific">African swine fever virus (isolate Tick/South Africa/Pretoriuskop Pr4/1996)</name>
    <name type="common">ASFV</name>
    <dbReference type="NCBI Taxonomy" id="561443"/>
    <lineage>
        <taxon>Viruses</taxon>
        <taxon>Varidnaviria</taxon>
        <taxon>Bamfordvirae</taxon>
        <taxon>Nucleocytoviricota</taxon>
        <taxon>Pokkesviricetes</taxon>
        <taxon>Asfuvirales</taxon>
        <taxon>Asfarviridae</taxon>
        <taxon>Asfivirus</taxon>
        <taxon>African swine fever virus</taxon>
    </lineage>
</organism>
<accession>P0CAF4</accession>
<keyword id="KW-0426">Late protein</keyword>
<organismHost>
    <name type="scientific">Ornithodoros</name>
    <name type="common">relapsing fever ticks</name>
    <dbReference type="NCBI Taxonomy" id="6937"/>
</organismHost>
<organismHost>
    <name type="scientific">Phacochoerus aethiopicus</name>
    <name type="common">Warthog</name>
    <dbReference type="NCBI Taxonomy" id="85517"/>
</organismHost>
<organismHost>
    <name type="scientific">Phacochoerus africanus</name>
    <name type="common">Warthog</name>
    <dbReference type="NCBI Taxonomy" id="41426"/>
</organismHost>
<organismHost>
    <name type="scientific">Potamochoerus larvatus</name>
    <name type="common">Bushpig</name>
    <dbReference type="NCBI Taxonomy" id="273792"/>
</organismHost>
<organismHost>
    <name type="scientific">Sus scrofa</name>
    <name type="common">Pig</name>
    <dbReference type="NCBI Taxonomy" id="9823"/>
</organismHost>
<protein>
    <recommendedName>
        <fullName>Uncharacterized protein B354L</fullName>
        <shortName>pB354L</shortName>
    </recommendedName>
</protein>
<comment type="induction">
    <text evidence="1">Expressed in the late phase of the viral replicative cycle.</text>
</comment>
<comment type="similarity">
    <text evidence="1">Belongs to the asfivirus B354L family.</text>
</comment>
<reference key="1">
    <citation type="submission" date="2003-03" db="EMBL/GenBank/DDBJ databases">
        <title>African swine fever virus genomes.</title>
        <authorList>
            <person name="Kutish G.F."/>
            <person name="Rock D.L."/>
        </authorList>
    </citation>
    <scope>NUCLEOTIDE SEQUENCE [LARGE SCALE GENOMIC DNA]</scope>
</reference>